<organism>
    <name type="scientific">Escherichia coli (strain 55989 / EAEC)</name>
    <dbReference type="NCBI Taxonomy" id="585055"/>
    <lineage>
        <taxon>Bacteria</taxon>
        <taxon>Pseudomonadati</taxon>
        <taxon>Pseudomonadota</taxon>
        <taxon>Gammaproteobacteria</taxon>
        <taxon>Enterobacterales</taxon>
        <taxon>Enterobacteriaceae</taxon>
        <taxon>Escherichia</taxon>
    </lineage>
</organism>
<accession>B7LA56</accession>
<evidence type="ECO:0000255" key="1">
    <source>
        <dbReference type="HAMAP-Rule" id="MF_00595"/>
    </source>
</evidence>
<sequence length="883" mass="99077">MNEQYSALRSNVSMLGKVLGETIKDALGEHILERVETIRKLSKSSRAGNDANRQELLTTLQNLSNDELLPVARAFSQFLNLANTAEQYHSISPKGEAASNPEVIARTLRKLKNQPELSEDTIKKAVESLSLELVLTAHPTEITRRTLIHKMVEVNACLKQLDNKDIADYEHNQLMRRLRQLIAQSWHTDEIRKLRPSPVDEAKWGFAVVENSLWQGVPNYLRELNEQLEENLGYKLPVEFVPVRFTSWMGGDRDGNPNVTADITRHVLLLSRWKATDLFLKDIQVLVSELSMVEATPELLALVGEEGAAEPYRYLMKNLRSRLMATQAWLEARLKGEELPKPEGLLTQNEELWEPLYACYQSLQACGMGIIANGDLLDTLRRVKCFGVPLVRIDIRQESTRHTEALGELTRYLGIGDYESWSEADKQAFLIRELNSKRPLLPRNWQPSAETREVLDTCQVIAEAPQGSIAAYVISMAKTPSDVLAVHLLLKEAGIGFAMPVAPLFETLDDLNNANDVMTQLLNIDWYRGLIQGKQMVMIGYSDSAKDAGVMAASWAQYQAQDALIKTCEKAGIELTLFHGRGGSIGRGGAPAHAALLSQPPGSLKGGLRVTEQGEMIRFKYGLPEITVSSLSLYTGAILEANLLPPPEPKESWRRIMDELSVISCDLYRGYVRENKDFVPYFRSATPEQELGKLPLGSRPAKRRPTGGVESLRAIPWIFAWTQNRLMLPAWLGAGTALQKVVEDGKQSELEAMCRDWPFFSTRLGMLEMVFAKADLWLAEYYDQRLVDKALWPLGKELRNLQEEDIKVVLAIANDSHLMADLPWIAESIQLRNIYTDPLNVLQAELLHRSRQAEKEGQEPDPRVEQALMVTIAGIAAGMRNTG</sequence>
<name>CAPP_ECO55</name>
<protein>
    <recommendedName>
        <fullName evidence="1">Phosphoenolpyruvate carboxylase</fullName>
        <shortName evidence="1">PEPC</shortName>
        <shortName evidence="1">PEPCase</shortName>
        <ecNumber evidence="1">4.1.1.31</ecNumber>
    </recommendedName>
</protein>
<comment type="function">
    <text evidence="1">Forms oxaloacetate, a four-carbon dicarboxylic acid source for the tricarboxylic acid cycle.</text>
</comment>
<comment type="catalytic activity">
    <reaction evidence="1">
        <text>oxaloacetate + phosphate = phosphoenolpyruvate + hydrogencarbonate</text>
        <dbReference type="Rhea" id="RHEA:28370"/>
        <dbReference type="ChEBI" id="CHEBI:16452"/>
        <dbReference type="ChEBI" id="CHEBI:17544"/>
        <dbReference type="ChEBI" id="CHEBI:43474"/>
        <dbReference type="ChEBI" id="CHEBI:58702"/>
        <dbReference type="EC" id="4.1.1.31"/>
    </reaction>
</comment>
<comment type="cofactor">
    <cofactor evidence="1">
        <name>Mg(2+)</name>
        <dbReference type="ChEBI" id="CHEBI:18420"/>
    </cofactor>
</comment>
<comment type="similarity">
    <text evidence="1">Belongs to the PEPCase type 1 family.</text>
</comment>
<dbReference type="EC" id="4.1.1.31" evidence="1"/>
<dbReference type="EMBL" id="CU928145">
    <property type="protein sequence ID" value="CAV01186.1"/>
    <property type="molecule type" value="Genomic_DNA"/>
</dbReference>
<dbReference type="RefSeq" id="WP_001005579.1">
    <property type="nucleotide sequence ID" value="NC_011748.1"/>
</dbReference>
<dbReference type="SMR" id="B7LA56"/>
<dbReference type="GeneID" id="93777937"/>
<dbReference type="KEGG" id="eck:EC55989_4438"/>
<dbReference type="HOGENOM" id="CLU_006557_2_0_6"/>
<dbReference type="Proteomes" id="UP000000746">
    <property type="component" value="Chromosome"/>
</dbReference>
<dbReference type="GO" id="GO:0005829">
    <property type="term" value="C:cytosol"/>
    <property type="evidence" value="ECO:0007669"/>
    <property type="project" value="TreeGrafter"/>
</dbReference>
<dbReference type="GO" id="GO:0000287">
    <property type="term" value="F:magnesium ion binding"/>
    <property type="evidence" value="ECO:0007669"/>
    <property type="project" value="UniProtKB-UniRule"/>
</dbReference>
<dbReference type="GO" id="GO:0008964">
    <property type="term" value="F:phosphoenolpyruvate carboxylase activity"/>
    <property type="evidence" value="ECO:0007669"/>
    <property type="project" value="UniProtKB-UniRule"/>
</dbReference>
<dbReference type="GO" id="GO:0015977">
    <property type="term" value="P:carbon fixation"/>
    <property type="evidence" value="ECO:0007669"/>
    <property type="project" value="UniProtKB-UniRule"/>
</dbReference>
<dbReference type="GO" id="GO:0006107">
    <property type="term" value="P:oxaloacetate metabolic process"/>
    <property type="evidence" value="ECO:0007669"/>
    <property type="project" value="UniProtKB-UniRule"/>
</dbReference>
<dbReference type="GO" id="GO:0006099">
    <property type="term" value="P:tricarboxylic acid cycle"/>
    <property type="evidence" value="ECO:0007669"/>
    <property type="project" value="InterPro"/>
</dbReference>
<dbReference type="FunFam" id="1.20.1440.90:FF:000002">
    <property type="entry name" value="Phosphoenolpyruvate carboxylase"/>
    <property type="match status" value="1"/>
</dbReference>
<dbReference type="Gene3D" id="1.20.1440.90">
    <property type="entry name" value="Phosphoenolpyruvate/pyruvate domain"/>
    <property type="match status" value="1"/>
</dbReference>
<dbReference type="HAMAP" id="MF_00595">
    <property type="entry name" value="PEPcase_type1"/>
    <property type="match status" value="1"/>
</dbReference>
<dbReference type="InterPro" id="IPR021135">
    <property type="entry name" value="PEP_COase"/>
</dbReference>
<dbReference type="InterPro" id="IPR022805">
    <property type="entry name" value="PEP_COase_bac/pln-type"/>
</dbReference>
<dbReference type="InterPro" id="IPR018129">
    <property type="entry name" value="PEP_COase_Lys_AS"/>
</dbReference>
<dbReference type="InterPro" id="IPR033129">
    <property type="entry name" value="PEPCASE_His_AS"/>
</dbReference>
<dbReference type="InterPro" id="IPR015813">
    <property type="entry name" value="Pyrv/PenolPyrv_kinase-like_dom"/>
</dbReference>
<dbReference type="NCBIfam" id="NF000584">
    <property type="entry name" value="PRK00009.1"/>
    <property type="match status" value="1"/>
</dbReference>
<dbReference type="PANTHER" id="PTHR30523">
    <property type="entry name" value="PHOSPHOENOLPYRUVATE CARBOXYLASE"/>
    <property type="match status" value="1"/>
</dbReference>
<dbReference type="PANTHER" id="PTHR30523:SF6">
    <property type="entry name" value="PHOSPHOENOLPYRUVATE CARBOXYLASE"/>
    <property type="match status" value="1"/>
</dbReference>
<dbReference type="Pfam" id="PF00311">
    <property type="entry name" value="PEPcase"/>
    <property type="match status" value="1"/>
</dbReference>
<dbReference type="PRINTS" id="PR00150">
    <property type="entry name" value="PEPCARBXLASE"/>
</dbReference>
<dbReference type="SUPFAM" id="SSF51621">
    <property type="entry name" value="Phosphoenolpyruvate/pyruvate domain"/>
    <property type="match status" value="1"/>
</dbReference>
<dbReference type="PROSITE" id="PS00781">
    <property type="entry name" value="PEPCASE_1"/>
    <property type="match status" value="1"/>
</dbReference>
<dbReference type="PROSITE" id="PS00393">
    <property type="entry name" value="PEPCASE_2"/>
    <property type="match status" value="1"/>
</dbReference>
<keyword id="KW-0120">Carbon dioxide fixation</keyword>
<keyword id="KW-0456">Lyase</keyword>
<keyword id="KW-0460">Magnesium</keyword>
<keyword id="KW-1185">Reference proteome</keyword>
<feature type="chain" id="PRO_1000146979" description="Phosphoenolpyruvate carboxylase">
    <location>
        <begin position="1"/>
        <end position="883"/>
    </location>
</feature>
<feature type="active site" evidence="1">
    <location>
        <position position="138"/>
    </location>
</feature>
<feature type="active site" evidence="1">
    <location>
        <position position="546"/>
    </location>
</feature>
<reference key="1">
    <citation type="journal article" date="2009" name="PLoS Genet.">
        <title>Organised genome dynamics in the Escherichia coli species results in highly diverse adaptive paths.</title>
        <authorList>
            <person name="Touchon M."/>
            <person name="Hoede C."/>
            <person name="Tenaillon O."/>
            <person name="Barbe V."/>
            <person name="Baeriswyl S."/>
            <person name="Bidet P."/>
            <person name="Bingen E."/>
            <person name="Bonacorsi S."/>
            <person name="Bouchier C."/>
            <person name="Bouvet O."/>
            <person name="Calteau A."/>
            <person name="Chiapello H."/>
            <person name="Clermont O."/>
            <person name="Cruveiller S."/>
            <person name="Danchin A."/>
            <person name="Diard M."/>
            <person name="Dossat C."/>
            <person name="Karoui M.E."/>
            <person name="Frapy E."/>
            <person name="Garry L."/>
            <person name="Ghigo J.M."/>
            <person name="Gilles A.M."/>
            <person name="Johnson J."/>
            <person name="Le Bouguenec C."/>
            <person name="Lescat M."/>
            <person name="Mangenot S."/>
            <person name="Martinez-Jehanne V."/>
            <person name="Matic I."/>
            <person name="Nassif X."/>
            <person name="Oztas S."/>
            <person name="Petit M.A."/>
            <person name="Pichon C."/>
            <person name="Rouy Z."/>
            <person name="Ruf C.S."/>
            <person name="Schneider D."/>
            <person name="Tourret J."/>
            <person name="Vacherie B."/>
            <person name="Vallenet D."/>
            <person name="Medigue C."/>
            <person name="Rocha E.P.C."/>
            <person name="Denamur E."/>
        </authorList>
    </citation>
    <scope>NUCLEOTIDE SEQUENCE [LARGE SCALE GENOMIC DNA]</scope>
    <source>
        <strain>55989 / EAEC</strain>
    </source>
</reference>
<gene>
    <name evidence="1" type="primary">ppc</name>
    <name type="ordered locus">EC55989_4438</name>
</gene>
<proteinExistence type="inferred from homology"/>